<keyword id="KW-0030">Aminoacyl-tRNA synthetase</keyword>
<keyword id="KW-0067">ATP-binding</keyword>
<keyword id="KW-0963">Cytoplasm</keyword>
<keyword id="KW-0436">Ligase</keyword>
<keyword id="KW-0547">Nucleotide-binding</keyword>
<keyword id="KW-0648">Protein biosynthesis</keyword>
<name>SYS_METS4</name>
<gene>
    <name evidence="1" type="primary">serS</name>
    <name type="ordered locus">M446_6577</name>
</gene>
<comment type="function">
    <text evidence="1">Catalyzes the attachment of serine to tRNA(Ser). Is also able to aminoacylate tRNA(Sec) with serine, to form the misacylated tRNA L-seryl-tRNA(Sec), which will be further converted into selenocysteinyl-tRNA(Sec).</text>
</comment>
<comment type="catalytic activity">
    <reaction evidence="1">
        <text>tRNA(Ser) + L-serine + ATP = L-seryl-tRNA(Ser) + AMP + diphosphate + H(+)</text>
        <dbReference type="Rhea" id="RHEA:12292"/>
        <dbReference type="Rhea" id="RHEA-COMP:9669"/>
        <dbReference type="Rhea" id="RHEA-COMP:9703"/>
        <dbReference type="ChEBI" id="CHEBI:15378"/>
        <dbReference type="ChEBI" id="CHEBI:30616"/>
        <dbReference type="ChEBI" id="CHEBI:33019"/>
        <dbReference type="ChEBI" id="CHEBI:33384"/>
        <dbReference type="ChEBI" id="CHEBI:78442"/>
        <dbReference type="ChEBI" id="CHEBI:78533"/>
        <dbReference type="ChEBI" id="CHEBI:456215"/>
        <dbReference type="EC" id="6.1.1.11"/>
    </reaction>
</comment>
<comment type="catalytic activity">
    <reaction evidence="1">
        <text>tRNA(Sec) + L-serine + ATP = L-seryl-tRNA(Sec) + AMP + diphosphate + H(+)</text>
        <dbReference type="Rhea" id="RHEA:42580"/>
        <dbReference type="Rhea" id="RHEA-COMP:9742"/>
        <dbReference type="Rhea" id="RHEA-COMP:10128"/>
        <dbReference type="ChEBI" id="CHEBI:15378"/>
        <dbReference type="ChEBI" id="CHEBI:30616"/>
        <dbReference type="ChEBI" id="CHEBI:33019"/>
        <dbReference type="ChEBI" id="CHEBI:33384"/>
        <dbReference type="ChEBI" id="CHEBI:78442"/>
        <dbReference type="ChEBI" id="CHEBI:78533"/>
        <dbReference type="ChEBI" id="CHEBI:456215"/>
        <dbReference type="EC" id="6.1.1.11"/>
    </reaction>
</comment>
<comment type="pathway">
    <text evidence="1">Aminoacyl-tRNA biosynthesis; selenocysteinyl-tRNA(Sec) biosynthesis; L-seryl-tRNA(Sec) from L-serine and tRNA(Sec): step 1/1.</text>
</comment>
<comment type="subunit">
    <text evidence="1">Homodimer. The tRNA molecule binds across the dimer.</text>
</comment>
<comment type="subcellular location">
    <subcellularLocation>
        <location evidence="1">Cytoplasm</location>
    </subcellularLocation>
</comment>
<comment type="domain">
    <text evidence="1">Consists of two distinct domains, a catalytic core and a N-terminal extension that is involved in tRNA binding.</text>
</comment>
<comment type="similarity">
    <text evidence="1">Belongs to the class-II aminoacyl-tRNA synthetase family. Type-1 seryl-tRNA synthetase subfamily.</text>
</comment>
<sequence>MHDIRVIRDNPAAFDAGLRRRGLEPLAAELVALDDARKAAISAAQVAQERRNALSKEIGAAKKARDEERARALMAEVARLKEQAPGLDAAADAAARALDARLAAIPNTPGPEVPEGRDEHDNVELRRFEGRGRAESGRQHFELGEAAGLMDFEAAARLSGSRFVVLKGRLARLERALGQFMLDLHTAEHGYTEVAPPLLVRDEAMFGTAQLPKFRDDQFAAQPGAVEPGAPGRWLIPTAEVPLTNLVRESILSEDELPLRFTALTPCFRAEAGAAGRDTRGMLRQHQFTKVELVSITAPEQSAEEHERMLACAEAVLRRLDLPYRVMTLCTGDMGFASQKTYDIEVWLPGQGTYREISSCSVCGDFQARRMEARFRRREDRGLGYVHSLNGSGVAVGRALIAVMENYQNPDGSVTVPSALAPYMGGVTRIEGPHA</sequence>
<organism>
    <name type="scientific">Methylobacterium sp. (strain 4-46)</name>
    <dbReference type="NCBI Taxonomy" id="426117"/>
    <lineage>
        <taxon>Bacteria</taxon>
        <taxon>Pseudomonadati</taxon>
        <taxon>Pseudomonadota</taxon>
        <taxon>Alphaproteobacteria</taxon>
        <taxon>Hyphomicrobiales</taxon>
        <taxon>Methylobacteriaceae</taxon>
        <taxon>Methylobacterium</taxon>
    </lineage>
</organism>
<evidence type="ECO:0000255" key="1">
    <source>
        <dbReference type="HAMAP-Rule" id="MF_00176"/>
    </source>
</evidence>
<accession>B0UD12</accession>
<protein>
    <recommendedName>
        <fullName evidence="1">Serine--tRNA ligase</fullName>
        <ecNumber evidence="1">6.1.1.11</ecNumber>
    </recommendedName>
    <alternativeName>
        <fullName evidence="1">Seryl-tRNA synthetase</fullName>
        <shortName evidence="1">SerRS</shortName>
    </alternativeName>
    <alternativeName>
        <fullName evidence="1">Seryl-tRNA(Ser/Sec) synthetase</fullName>
    </alternativeName>
</protein>
<reference key="1">
    <citation type="submission" date="2008-02" db="EMBL/GenBank/DDBJ databases">
        <title>Complete sequence of chromosome of Methylobacterium sp. 4-46.</title>
        <authorList>
            <consortium name="US DOE Joint Genome Institute"/>
            <person name="Copeland A."/>
            <person name="Lucas S."/>
            <person name="Lapidus A."/>
            <person name="Glavina del Rio T."/>
            <person name="Dalin E."/>
            <person name="Tice H."/>
            <person name="Bruce D."/>
            <person name="Goodwin L."/>
            <person name="Pitluck S."/>
            <person name="Chertkov O."/>
            <person name="Brettin T."/>
            <person name="Detter J.C."/>
            <person name="Han C."/>
            <person name="Kuske C.R."/>
            <person name="Schmutz J."/>
            <person name="Larimer F."/>
            <person name="Land M."/>
            <person name="Hauser L."/>
            <person name="Kyrpides N."/>
            <person name="Ivanova N."/>
            <person name="Marx C.J."/>
            <person name="Richardson P."/>
        </authorList>
    </citation>
    <scope>NUCLEOTIDE SEQUENCE [LARGE SCALE GENOMIC DNA]</scope>
    <source>
        <strain>4-46</strain>
    </source>
</reference>
<proteinExistence type="inferred from homology"/>
<dbReference type="EC" id="6.1.1.11" evidence="1"/>
<dbReference type="EMBL" id="CP000943">
    <property type="protein sequence ID" value="ACA20833.1"/>
    <property type="molecule type" value="Genomic_DNA"/>
</dbReference>
<dbReference type="RefSeq" id="WP_012336209.1">
    <property type="nucleotide sequence ID" value="NC_010511.1"/>
</dbReference>
<dbReference type="SMR" id="B0UD12"/>
<dbReference type="STRING" id="426117.M446_6577"/>
<dbReference type="KEGG" id="met:M446_6577"/>
<dbReference type="eggNOG" id="COG0172">
    <property type="taxonomic scope" value="Bacteria"/>
</dbReference>
<dbReference type="HOGENOM" id="CLU_023797_1_1_5"/>
<dbReference type="UniPathway" id="UPA00906">
    <property type="reaction ID" value="UER00895"/>
</dbReference>
<dbReference type="GO" id="GO:0005737">
    <property type="term" value="C:cytoplasm"/>
    <property type="evidence" value="ECO:0007669"/>
    <property type="project" value="UniProtKB-SubCell"/>
</dbReference>
<dbReference type="GO" id="GO:0005524">
    <property type="term" value="F:ATP binding"/>
    <property type="evidence" value="ECO:0007669"/>
    <property type="project" value="UniProtKB-UniRule"/>
</dbReference>
<dbReference type="GO" id="GO:0004828">
    <property type="term" value="F:serine-tRNA ligase activity"/>
    <property type="evidence" value="ECO:0007669"/>
    <property type="project" value="UniProtKB-UniRule"/>
</dbReference>
<dbReference type="GO" id="GO:0016260">
    <property type="term" value="P:selenocysteine biosynthetic process"/>
    <property type="evidence" value="ECO:0007669"/>
    <property type="project" value="UniProtKB-UniRule"/>
</dbReference>
<dbReference type="GO" id="GO:0006434">
    <property type="term" value="P:seryl-tRNA aminoacylation"/>
    <property type="evidence" value="ECO:0007669"/>
    <property type="project" value="UniProtKB-UniRule"/>
</dbReference>
<dbReference type="CDD" id="cd00770">
    <property type="entry name" value="SerRS_core"/>
    <property type="match status" value="1"/>
</dbReference>
<dbReference type="Gene3D" id="3.30.930.10">
    <property type="entry name" value="Bira Bifunctional Protein, Domain 2"/>
    <property type="match status" value="1"/>
</dbReference>
<dbReference type="Gene3D" id="1.10.287.40">
    <property type="entry name" value="Serine-tRNA synthetase, tRNA binding domain"/>
    <property type="match status" value="1"/>
</dbReference>
<dbReference type="HAMAP" id="MF_00176">
    <property type="entry name" value="Ser_tRNA_synth_type1"/>
    <property type="match status" value="1"/>
</dbReference>
<dbReference type="InterPro" id="IPR002314">
    <property type="entry name" value="aa-tRNA-synt_IIb"/>
</dbReference>
<dbReference type="InterPro" id="IPR006195">
    <property type="entry name" value="aa-tRNA-synth_II"/>
</dbReference>
<dbReference type="InterPro" id="IPR045864">
    <property type="entry name" value="aa-tRNA-synth_II/BPL/LPL"/>
</dbReference>
<dbReference type="InterPro" id="IPR002317">
    <property type="entry name" value="Ser-tRNA-ligase_type_1"/>
</dbReference>
<dbReference type="InterPro" id="IPR015866">
    <property type="entry name" value="Ser-tRNA-synth_1_N"/>
</dbReference>
<dbReference type="InterPro" id="IPR042103">
    <property type="entry name" value="SerRS_1_N_sf"/>
</dbReference>
<dbReference type="InterPro" id="IPR033729">
    <property type="entry name" value="SerRS_core"/>
</dbReference>
<dbReference type="InterPro" id="IPR010978">
    <property type="entry name" value="tRNA-bd_arm"/>
</dbReference>
<dbReference type="NCBIfam" id="TIGR00414">
    <property type="entry name" value="serS"/>
    <property type="match status" value="1"/>
</dbReference>
<dbReference type="PANTHER" id="PTHR43697:SF1">
    <property type="entry name" value="SERINE--TRNA LIGASE"/>
    <property type="match status" value="1"/>
</dbReference>
<dbReference type="PANTHER" id="PTHR43697">
    <property type="entry name" value="SERYL-TRNA SYNTHETASE"/>
    <property type="match status" value="1"/>
</dbReference>
<dbReference type="Pfam" id="PF02403">
    <property type="entry name" value="Seryl_tRNA_N"/>
    <property type="match status" value="1"/>
</dbReference>
<dbReference type="Pfam" id="PF00587">
    <property type="entry name" value="tRNA-synt_2b"/>
    <property type="match status" value="1"/>
</dbReference>
<dbReference type="PIRSF" id="PIRSF001529">
    <property type="entry name" value="Ser-tRNA-synth_IIa"/>
    <property type="match status" value="1"/>
</dbReference>
<dbReference type="PRINTS" id="PR00981">
    <property type="entry name" value="TRNASYNTHSER"/>
</dbReference>
<dbReference type="SUPFAM" id="SSF55681">
    <property type="entry name" value="Class II aaRS and biotin synthetases"/>
    <property type="match status" value="1"/>
</dbReference>
<dbReference type="SUPFAM" id="SSF46589">
    <property type="entry name" value="tRNA-binding arm"/>
    <property type="match status" value="1"/>
</dbReference>
<dbReference type="PROSITE" id="PS50862">
    <property type="entry name" value="AA_TRNA_LIGASE_II"/>
    <property type="match status" value="1"/>
</dbReference>
<feature type="chain" id="PRO_1000098094" description="Serine--tRNA ligase">
    <location>
        <begin position="1"/>
        <end position="435"/>
    </location>
</feature>
<feature type="binding site" evidence="1">
    <location>
        <begin position="238"/>
        <end position="240"/>
    </location>
    <ligand>
        <name>L-serine</name>
        <dbReference type="ChEBI" id="CHEBI:33384"/>
    </ligand>
</feature>
<feature type="binding site" evidence="1">
    <location>
        <begin position="269"/>
        <end position="271"/>
    </location>
    <ligand>
        <name>ATP</name>
        <dbReference type="ChEBI" id="CHEBI:30616"/>
    </ligand>
</feature>
<feature type="binding site" evidence="1">
    <location>
        <position position="292"/>
    </location>
    <ligand>
        <name>L-serine</name>
        <dbReference type="ChEBI" id="CHEBI:33384"/>
    </ligand>
</feature>
<feature type="binding site" evidence="1">
    <location>
        <begin position="356"/>
        <end position="359"/>
    </location>
    <ligand>
        <name>ATP</name>
        <dbReference type="ChEBI" id="CHEBI:30616"/>
    </ligand>
</feature>
<feature type="binding site" evidence="1">
    <location>
        <position position="392"/>
    </location>
    <ligand>
        <name>L-serine</name>
        <dbReference type="ChEBI" id="CHEBI:33384"/>
    </ligand>
</feature>